<protein>
    <recommendedName>
        <fullName>Ras and EF-hand domain-containing protein homolog</fullName>
    </recommendedName>
</protein>
<organism>
    <name type="scientific">Mus musculus</name>
    <name type="common">Mouse</name>
    <dbReference type="NCBI Taxonomy" id="10090"/>
    <lineage>
        <taxon>Eukaryota</taxon>
        <taxon>Metazoa</taxon>
        <taxon>Chordata</taxon>
        <taxon>Craniata</taxon>
        <taxon>Vertebrata</taxon>
        <taxon>Euteleostomi</taxon>
        <taxon>Mammalia</taxon>
        <taxon>Eutheria</taxon>
        <taxon>Euarchontoglires</taxon>
        <taxon>Glires</taxon>
        <taxon>Rodentia</taxon>
        <taxon>Myomorpha</taxon>
        <taxon>Muroidea</taxon>
        <taxon>Muridae</taxon>
        <taxon>Murinae</taxon>
        <taxon>Mus</taxon>
        <taxon>Mus</taxon>
    </lineage>
</organism>
<gene>
    <name type="primary">Rasef</name>
</gene>
<proteinExistence type="evidence at protein level"/>
<keyword id="KW-0025">Alternative splicing</keyword>
<keyword id="KW-0175">Coiled coil</keyword>
<keyword id="KW-0963">Cytoplasm</keyword>
<keyword id="KW-0342">GTP-binding</keyword>
<keyword id="KW-0547">Nucleotide-binding</keyword>
<keyword id="KW-0597">Phosphoprotein</keyword>
<keyword id="KW-1185">Reference proteome</keyword>
<dbReference type="EMBL" id="AK132691">
    <property type="protein sequence ID" value="BAE21304.1"/>
    <property type="molecule type" value="mRNA"/>
</dbReference>
<dbReference type="EMBL" id="BX294159">
    <property type="status" value="NOT_ANNOTATED_CDS"/>
    <property type="molecule type" value="Genomic_DNA"/>
</dbReference>
<dbReference type="EMBL" id="BC125539">
    <property type="protein sequence ID" value="AAI25540.1"/>
    <property type="molecule type" value="mRNA"/>
</dbReference>
<dbReference type="EMBL" id="BC137774">
    <property type="protein sequence ID" value="AAI37775.1"/>
    <property type="molecule type" value="mRNA"/>
</dbReference>
<dbReference type="CCDS" id="CCDS18281.1">
    <molecule id="Q5RI75-1"/>
</dbReference>
<dbReference type="RefSeq" id="NP_001017427.1">
    <molecule id="Q5RI75-1"/>
    <property type="nucleotide sequence ID" value="NM_001017427.1"/>
</dbReference>
<dbReference type="RefSeq" id="NP_001391891.1">
    <molecule id="Q5RI75-2"/>
    <property type="nucleotide sequence ID" value="NM_001404962.1"/>
</dbReference>
<dbReference type="RefSeq" id="XP_017175690.1">
    <molecule id="Q5RI75-1"/>
    <property type="nucleotide sequence ID" value="XM_017320201.2"/>
</dbReference>
<dbReference type="SMR" id="Q5RI75"/>
<dbReference type="FunCoup" id="Q5RI75">
    <property type="interactions" value="1000"/>
</dbReference>
<dbReference type="STRING" id="10090.ENSMUSP00000062771"/>
<dbReference type="iPTMnet" id="Q5RI75"/>
<dbReference type="PhosphoSitePlus" id="Q5RI75"/>
<dbReference type="jPOST" id="Q5RI75"/>
<dbReference type="PaxDb" id="10090-ENSMUSP00000062771"/>
<dbReference type="PeptideAtlas" id="Q5RI75"/>
<dbReference type="ProteomicsDB" id="300353">
    <molecule id="Q5RI75-1"/>
</dbReference>
<dbReference type="ProteomicsDB" id="300354">
    <molecule id="Q5RI75-2"/>
</dbReference>
<dbReference type="Antibodypedia" id="13004">
    <property type="antibodies" value="109 antibodies from 27 providers"/>
</dbReference>
<dbReference type="DNASU" id="242505"/>
<dbReference type="Ensembl" id="ENSMUST00000058292.13">
    <molecule id="Q5RI75-1"/>
    <property type="protein sequence ID" value="ENSMUSP00000062771.7"/>
    <property type="gene ID" value="ENSMUSG00000043003.15"/>
</dbReference>
<dbReference type="Ensembl" id="ENSMUST00000102837.3">
    <molecule id="Q5RI75-2"/>
    <property type="protein sequence ID" value="ENSMUSP00000099901.3"/>
    <property type="gene ID" value="ENSMUSG00000043003.15"/>
</dbReference>
<dbReference type="GeneID" id="242505"/>
<dbReference type="KEGG" id="mmu:242505"/>
<dbReference type="UCSC" id="uc008tiw.1">
    <molecule id="Q5RI75-1"/>
    <property type="organism name" value="mouse"/>
</dbReference>
<dbReference type="AGR" id="MGI:2448565"/>
<dbReference type="CTD" id="158158"/>
<dbReference type="MGI" id="MGI:2448565">
    <property type="gene designation" value="Rasef"/>
</dbReference>
<dbReference type="VEuPathDB" id="HostDB:ENSMUSG00000043003"/>
<dbReference type="eggNOG" id="KOG0078">
    <property type="taxonomic scope" value="Eukaryota"/>
</dbReference>
<dbReference type="GeneTree" id="ENSGT00940000159488"/>
<dbReference type="HOGENOM" id="CLU_023178_1_0_1"/>
<dbReference type="InParanoid" id="Q5RI75"/>
<dbReference type="PhylomeDB" id="Q5RI75"/>
<dbReference type="TreeFam" id="TF313106"/>
<dbReference type="BioGRID-ORCS" id="242505">
    <property type="hits" value="3 hits in 76 CRISPR screens"/>
</dbReference>
<dbReference type="ChiTaRS" id="Rasef">
    <property type="organism name" value="mouse"/>
</dbReference>
<dbReference type="PRO" id="PR:Q5RI75"/>
<dbReference type="Proteomes" id="UP000000589">
    <property type="component" value="Chromosome 4"/>
</dbReference>
<dbReference type="RNAct" id="Q5RI75">
    <property type="molecule type" value="protein"/>
</dbReference>
<dbReference type="Bgee" id="ENSMUSG00000043003">
    <property type="expression patterns" value="Expressed in epithelium of stomach and 64 other cell types or tissues"/>
</dbReference>
<dbReference type="ExpressionAtlas" id="Q5RI75">
    <property type="expression patterns" value="baseline and differential"/>
</dbReference>
<dbReference type="GO" id="GO:0048471">
    <property type="term" value="C:perinuclear region of cytoplasm"/>
    <property type="evidence" value="ECO:0007669"/>
    <property type="project" value="UniProtKB-SubCell"/>
</dbReference>
<dbReference type="GO" id="GO:0005525">
    <property type="term" value="F:GTP binding"/>
    <property type="evidence" value="ECO:0007669"/>
    <property type="project" value="UniProtKB-KW"/>
</dbReference>
<dbReference type="GO" id="GO:0003924">
    <property type="term" value="F:GTPase activity"/>
    <property type="evidence" value="ECO:0007669"/>
    <property type="project" value="InterPro"/>
</dbReference>
<dbReference type="CDD" id="cd00154">
    <property type="entry name" value="Rab"/>
    <property type="match status" value="1"/>
</dbReference>
<dbReference type="FunFam" id="1.10.287.1490:FF:000019">
    <property type="entry name" value="RAS and EF-hand domain containing"/>
    <property type="match status" value="1"/>
</dbReference>
<dbReference type="FunFam" id="3.40.50.300:FF:001348">
    <property type="entry name" value="Ras and EF-hand domain-containing protein"/>
    <property type="match status" value="1"/>
</dbReference>
<dbReference type="Gene3D" id="1.10.287.1490">
    <property type="match status" value="1"/>
</dbReference>
<dbReference type="Gene3D" id="3.40.50.300">
    <property type="entry name" value="P-loop containing nucleotide triphosphate hydrolases"/>
    <property type="match status" value="1"/>
</dbReference>
<dbReference type="InterPro" id="IPR027417">
    <property type="entry name" value="P-loop_NTPase"/>
</dbReference>
<dbReference type="InterPro" id="IPR050227">
    <property type="entry name" value="Rab"/>
</dbReference>
<dbReference type="InterPro" id="IPR005225">
    <property type="entry name" value="Small_GTP-bd"/>
</dbReference>
<dbReference type="InterPro" id="IPR001806">
    <property type="entry name" value="Small_GTPase"/>
</dbReference>
<dbReference type="NCBIfam" id="TIGR00231">
    <property type="entry name" value="small_GTP"/>
    <property type="match status" value="1"/>
</dbReference>
<dbReference type="PANTHER" id="PTHR47977">
    <property type="entry name" value="RAS-RELATED PROTEIN RAB"/>
    <property type="match status" value="1"/>
</dbReference>
<dbReference type="Pfam" id="PF00071">
    <property type="entry name" value="Ras"/>
    <property type="match status" value="1"/>
</dbReference>
<dbReference type="PRINTS" id="PR00449">
    <property type="entry name" value="RASTRNSFRMNG"/>
</dbReference>
<dbReference type="SMART" id="SM00177">
    <property type="entry name" value="ARF"/>
    <property type="match status" value="1"/>
</dbReference>
<dbReference type="SMART" id="SM00175">
    <property type="entry name" value="RAB"/>
    <property type="match status" value="1"/>
</dbReference>
<dbReference type="SMART" id="SM00176">
    <property type="entry name" value="RAN"/>
    <property type="match status" value="1"/>
</dbReference>
<dbReference type="SMART" id="SM00173">
    <property type="entry name" value="RAS"/>
    <property type="match status" value="1"/>
</dbReference>
<dbReference type="SMART" id="SM00174">
    <property type="entry name" value="RHO"/>
    <property type="match status" value="1"/>
</dbReference>
<dbReference type="SUPFAM" id="SSF52540">
    <property type="entry name" value="P-loop containing nucleoside triphosphate hydrolases"/>
    <property type="match status" value="1"/>
</dbReference>
<dbReference type="PROSITE" id="PS51419">
    <property type="entry name" value="RAB"/>
    <property type="match status" value="1"/>
</dbReference>
<accession>Q5RI75</accession>
<accession>B2RQ59</accession>
<accession>Q5RI76</accession>
<comment type="function">
    <text evidence="1">Binds predominantly GDP, and also GTP (By similarity). Acts as a dynein adapter protein that activates dynein-mediated transport and dynein-dynactin motility on microtubules (By similarity).</text>
</comment>
<comment type="subunit">
    <text evidence="1">Homodimer (By similarity). Interacts with the dynein-dynactin complex (By similarity).</text>
</comment>
<comment type="subcellular location">
    <subcellularLocation>
        <location evidence="1">Cytoplasm</location>
        <location evidence="1">Perinuclear region</location>
    </subcellularLocation>
</comment>
<comment type="alternative products">
    <event type="alternative splicing"/>
    <isoform>
        <id>Q5RI75-1</id>
        <name>1</name>
        <sequence type="displayed"/>
    </isoform>
    <isoform>
        <id>Q5RI75-2</id>
        <name>2</name>
        <sequence type="described" ref="VSP_027768"/>
    </isoform>
</comment>
<comment type="similarity">
    <text evidence="4">Belongs to the small GTPase superfamily. Rab family.</text>
</comment>
<feature type="chain" id="PRO_0000299578" description="Ras and EF-hand domain-containing protein homolog">
    <location>
        <begin position="1"/>
        <end position="627"/>
    </location>
</feature>
<feature type="coiled-coil region" evidence="2">
    <location>
        <begin position="55"/>
        <end position="245"/>
    </location>
</feature>
<feature type="binding site" evidence="1">
    <location>
        <begin position="438"/>
        <end position="443"/>
    </location>
    <ligand>
        <name>GTP</name>
        <dbReference type="ChEBI" id="CHEBI:37565"/>
    </ligand>
</feature>
<feature type="binding site" evidence="1">
    <location>
        <begin position="541"/>
        <end position="544"/>
    </location>
    <ligand>
        <name>GTP</name>
        <dbReference type="ChEBI" id="CHEBI:37565"/>
    </ligand>
</feature>
<feature type="binding site" evidence="1">
    <location>
        <begin position="578"/>
        <end position="579"/>
    </location>
    <ligand>
        <name>GTP</name>
        <dbReference type="ChEBI" id="CHEBI:37565"/>
    </ligand>
</feature>
<feature type="modified residue" description="Phosphoserine" evidence="5">
    <location>
        <position position="266"/>
    </location>
</feature>
<feature type="modified residue" description="Phosphoserine" evidence="5">
    <location>
        <position position="272"/>
    </location>
</feature>
<feature type="splice variant" id="VSP_027768" description="In isoform 2." evidence="3">
    <location>
        <begin position="1"/>
        <end position="72"/>
    </location>
</feature>
<name>RASEF_MOUSE</name>
<reference key="1">
    <citation type="journal article" date="2005" name="Science">
        <title>The transcriptional landscape of the mammalian genome.</title>
        <authorList>
            <person name="Carninci P."/>
            <person name="Kasukawa T."/>
            <person name="Katayama S."/>
            <person name="Gough J."/>
            <person name="Frith M.C."/>
            <person name="Maeda N."/>
            <person name="Oyama R."/>
            <person name="Ravasi T."/>
            <person name="Lenhard B."/>
            <person name="Wells C."/>
            <person name="Kodzius R."/>
            <person name="Shimokawa K."/>
            <person name="Bajic V.B."/>
            <person name="Brenner S.E."/>
            <person name="Batalov S."/>
            <person name="Forrest A.R."/>
            <person name="Zavolan M."/>
            <person name="Davis M.J."/>
            <person name="Wilming L.G."/>
            <person name="Aidinis V."/>
            <person name="Allen J.E."/>
            <person name="Ambesi-Impiombato A."/>
            <person name="Apweiler R."/>
            <person name="Aturaliya R.N."/>
            <person name="Bailey T.L."/>
            <person name="Bansal M."/>
            <person name="Baxter L."/>
            <person name="Beisel K.W."/>
            <person name="Bersano T."/>
            <person name="Bono H."/>
            <person name="Chalk A.M."/>
            <person name="Chiu K.P."/>
            <person name="Choudhary V."/>
            <person name="Christoffels A."/>
            <person name="Clutterbuck D.R."/>
            <person name="Crowe M.L."/>
            <person name="Dalla E."/>
            <person name="Dalrymple B.P."/>
            <person name="de Bono B."/>
            <person name="Della Gatta G."/>
            <person name="di Bernardo D."/>
            <person name="Down T."/>
            <person name="Engstrom P."/>
            <person name="Fagiolini M."/>
            <person name="Faulkner G."/>
            <person name="Fletcher C.F."/>
            <person name="Fukushima T."/>
            <person name="Furuno M."/>
            <person name="Futaki S."/>
            <person name="Gariboldi M."/>
            <person name="Georgii-Hemming P."/>
            <person name="Gingeras T.R."/>
            <person name="Gojobori T."/>
            <person name="Green R.E."/>
            <person name="Gustincich S."/>
            <person name="Harbers M."/>
            <person name="Hayashi Y."/>
            <person name="Hensch T.K."/>
            <person name="Hirokawa N."/>
            <person name="Hill D."/>
            <person name="Huminiecki L."/>
            <person name="Iacono M."/>
            <person name="Ikeo K."/>
            <person name="Iwama A."/>
            <person name="Ishikawa T."/>
            <person name="Jakt M."/>
            <person name="Kanapin A."/>
            <person name="Katoh M."/>
            <person name="Kawasawa Y."/>
            <person name="Kelso J."/>
            <person name="Kitamura H."/>
            <person name="Kitano H."/>
            <person name="Kollias G."/>
            <person name="Krishnan S.P."/>
            <person name="Kruger A."/>
            <person name="Kummerfeld S.K."/>
            <person name="Kurochkin I.V."/>
            <person name="Lareau L.F."/>
            <person name="Lazarevic D."/>
            <person name="Lipovich L."/>
            <person name="Liu J."/>
            <person name="Liuni S."/>
            <person name="McWilliam S."/>
            <person name="Madan Babu M."/>
            <person name="Madera M."/>
            <person name="Marchionni L."/>
            <person name="Matsuda H."/>
            <person name="Matsuzawa S."/>
            <person name="Miki H."/>
            <person name="Mignone F."/>
            <person name="Miyake S."/>
            <person name="Morris K."/>
            <person name="Mottagui-Tabar S."/>
            <person name="Mulder N."/>
            <person name="Nakano N."/>
            <person name="Nakauchi H."/>
            <person name="Ng P."/>
            <person name="Nilsson R."/>
            <person name="Nishiguchi S."/>
            <person name="Nishikawa S."/>
            <person name="Nori F."/>
            <person name="Ohara O."/>
            <person name="Okazaki Y."/>
            <person name="Orlando V."/>
            <person name="Pang K.C."/>
            <person name="Pavan W.J."/>
            <person name="Pavesi G."/>
            <person name="Pesole G."/>
            <person name="Petrovsky N."/>
            <person name="Piazza S."/>
            <person name="Reed J."/>
            <person name="Reid J.F."/>
            <person name="Ring B.Z."/>
            <person name="Ringwald M."/>
            <person name="Rost B."/>
            <person name="Ruan Y."/>
            <person name="Salzberg S.L."/>
            <person name="Sandelin A."/>
            <person name="Schneider C."/>
            <person name="Schoenbach C."/>
            <person name="Sekiguchi K."/>
            <person name="Semple C.A."/>
            <person name="Seno S."/>
            <person name="Sessa L."/>
            <person name="Sheng Y."/>
            <person name="Shibata Y."/>
            <person name="Shimada H."/>
            <person name="Shimada K."/>
            <person name="Silva D."/>
            <person name="Sinclair B."/>
            <person name="Sperling S."/>
            <person name="Stupka E."/>
            <person name="Sugiura K."/>
            <person name="Sultana R."/>
            <person name="Takenaka Y."/>
            <person name="Taki K."/>
            <person name="Tammoja K."/>
            <person name="Tan S.L."/>
            <person name="Tang S."/>
            <person name="Taylor M.S."/>
            <person name="Tegner J."/>
            <person name="Teichmann S.A."/>
            <person name="Ueda H.R."/>
            <person name="van Nimwegen E."/>
            <person name="Verardo R."/>
            <person name="Wei C.L."/>
            <person name="Yagi K."/>
            <person name="Yamanishi H."/>
            <person name="Zabarovsky E."/>
            <person name="Zhu S."/>
            <person name="Zimmer A."/>
            <person name="Hide W."/>
            <person name="Bult C."/>
            <person name="Grimmond S.M."/>
            <person name="Teasdale R.D."/>
            <person name="Liu E.T."/>
            <person name="Brusic V."/>
            <person name="Quackenbush J."/>
            <person name="Wahlestedt C."/>
            <person name="Mattick J.S."/>
            <person name="Hume D.A."/>
            <person name="Kai C."/>
            <person name="Sasaki D."/>
            <person name="Tomaru Y."/>
            <person name="Fukuda S."/>
            <person name="Kanamori-Katayama M."/>
            <person name="Suzuki M."/>
            <person name="Aoki J."/>
            <person name="Arakawa T."/>
            <person name="Iida J."/>
            <person name="Imamura K."/>
            <person name="Itoh M."/>
            <person name="Kato T."/>
            <person name="Kawaji H."/>
            <person name="Kawagashira N."/>
            <person name="Kawashima T."/>
            <person name="Kojima M."/>
            <person name="Kondo S."/>
            <person name="Konno H."/>
            <person name="Nakano K."/>
            <person name="Ninomiya N."/>
            <person name="Nishio T."/>
            <person name="Okada M."/>
            <person name="Plessy C."/>
            <person name="Shibata K."/>
            <person name="Shiraki T."/>
            <person name="Suzuki S."/>
            <person name="Tagami M."/>
            <person name="Waki K."/>
            <person name="Watahiki A."/>
            <person name="Okamura-Oho Y."/>
            <person name="Suzuki H."/>
            <person name="Kawai J."/>
            <person name="Hayashizaki Y."/>
        </authorList>
    </citation>
    <scope>NUCLEOTIDE SEQUENCE [LARGE SCALE MRNA] (ISOFORM 2)</scope>
    <source>
        <strain>C57BL/6J</strain>
        <tissue>Testis</tissue>
    </source>
</reference>
<reference key="2">
    <citation type="journal article" date="2009" name="PLoS Biol.">
        <title>Lineage-specific biology revealed by a finished genome assembly of the mouse.</title>
        <authorList>
            <person name="Church D.M."/>
            <person name="Goodstadt L."/>
            <person name="Hillier L.W."/>
            <person name="Zody M.C."/>
            <person name="Goldstein S."/>
            <person name="She X."/>
            <person name="Bult C.J."/>
            <person name="Agarwala R."/>
            <person name="Cherry J.L."/>
            <person name="DiCuccio M."/>
            <person name="Hlavina W."/>
            <person name="Kapustin Y."/>
            <person name="Meric P."/>
            <person name="Maglott D."/>
            <person name="Birtle Z."/>
            <person name="Marques A.C."/>
            <person name="Graves T."/>
            <person name="Zhou S."/>
            <person name="Teague B."/>
            <person name="Potamousis K."/>
            <person name="Churas C."/>
            <person name="Place M."/>
            <person name="Herschleb J."/>
            <person name="Runnheim R."/>
            <person name="Forrest D."/>
            <person name="Amos-Landgraf J."/>
            <person name="Schwartz D.C."/>
            <person name="Cheng Z."/>
            <person name="Lindblad-Toh K."/>
            <person name="Eichler E.E."/>
            <person name="Ponting C.P."/>
        </authorList>
    </citation>
    <scope>NUCLEOTIDE SEQUENCE [LARGE SCALE GENOMIC DNA]</scope>
    <source>
        <strain>C57BL/6J</strain>
    </source>
</reference>
<reference key="3">
    <citation type="journal article" date="2004" name="Genome Res.">
        <title>The status, quality, and expansion of the NIH full-length cDNA project: the Mammalian Gene Collection (MGC).</title>
        <authorList>
            <consortium name="The MGC Project Team"/>
        </authorList>
    </citation>
    <scope>NUCLEOTIDE SEQUENCE [LARGE SCALE MRNA] (ISOFORM 1)</scope>
    <source>
        <tissue>Brain</tissue>
    </source>
</reference>
<reference key="4">
    <citation type="journal article" date="2010" name="Cell">
        <title>A tissue-specific atlas of mouse protein phosphorylation and expression.</title>
        <authorList>
            <person name="Huttlin E.L."/>
            <person name="Jedrychowski M.P."/>
            <person name="Elias J.E."/>
            <person name="Goswami T."/>
            <person name="Rad R."/>
            <person name="Beausoleil S.A."/>
            <person name="Villen J."/>
            <person name="Haas W."/>
            <person name="Sowa M.E."/>
            <person name="Gygi S.P."/>
        </authorList>
    </citation>
    <scope>PHOSPHORYLATION [LARGE SCALE ANALYSIS] AT SER-266 AND SER-272</scope>
    <scope>IDENTIFICATION BY MASS SPECTROMETRY [LARGE SCALE ANALYSIS]</scope>
    <source>
        <tissue>Pancreas</tissue>
    </source>
</reference>
<sequence>MAQEVSSSVAFIHRLLYTALRGLLGDRLKRGLKKEQVSTLYQNITLVEPRLLQPYERVIRNFLREIKLQSTEMENLAIAVKRAQDKAAIQLSELEEEMDQRIQAVENESRKDEKRKAEEALTDLRRQYETEVGDLQVTIKRLKKLEEQSRQISQKQDVTALKKQIHDLTMENQKLKKELLEAQTNVAFLQSELDALKSDYADQSLNSERDLEIIREYTEDRSSLERQIEILQTANRKLHDSNDGLRSALENTYSKLNRSLRINNISPGNTISRSSPKFNHHSSQPLAYDRSFHSSYADEDCDSLALCDPLQKMNYEVDSLPESCFDSGLSTLRDNECDSEVDYKHQGEFQTLHRTEESLGGDASDTDVPDIRDEEAFDSESVASVLHWQPQGSAGEGSTLSSSRKPISALSLQTDMVDNTSKVTSQKAYKIVLAGDAAVGKSSFLMRLCKNEFQGNTSATLGVDFQMKTLIVDGEQTVLQLWDTAGQERFRSIAKSYFRKADGVLLLYDVTCEKSFLNVREWVDMVEDGTHRTIPIMLVGNKADLRDVDNAENQKCISAYLGEKLAMTYGALFCETSAKDGSNVVEAVLHLAREVKKRTEDDDSRSITSLAGSTSKKSLQMKNCCNG</sequence>
<evidence type="ECO:0000250" key="1">
    <source>
        <dbReference type="UniProtKB" id="Q8IZ41"/>
    </source>
</evidence>
<evidence type="ECO:0000255" key="2"/>
<evidence type="ECO:0000303" key="3">
    <source>
    </source>
</evidence>
<evidence type="ECO:0000305" key="4"/>
<evidence type="ECO:0007744" key="5">
    <source>
    </source>
</evidence>